<keyword id="KW-0067">ATP-binding</keyword>
<keyword id="KW-0238">DNA-binding</keyword>
<keyword id="KW-0255">Endonuclease</keyword>
<keyword id="KW-0378">Hydrolase</keyword>
<keyword id="KW-0540">Nuclease</keyword>
<keyword id="KW-0547">Nucleotide-binding</keyword>
<keyword id="KW-1185">Reference proteome</keyword>
<keyword id="KW-0694">RNA-binding</keyword>
<keyword id="KW-0699">rRNA-binding</keyword>
<dbReference type="EC" id="3.1.-.-" evidence="1"/>
<dbReference type="EC" id="3.6.4.-" evidence="1"/>
<dbReference type="EMBL" id="AP008934">
    <property type="protein sequence ID" value="BAE18796.1"/>
    <property type="molecule type" value="Genomic_DNA"/>
</dbReference>
<dbReference type="RefSeq" id="WP_011303384.1">
    <property type="nucleotide sequence ID" value="NZ_MTGA01000039.1"/>
</dbReference>
<dbReference type="SMR" id="Q49WR1"/>
<dbReference type="GeneID" id="3615141"/>
<dbReference type="KEGG" id="ssp:SSP1651"/>
<dbReference type="PATRIC" id="fig|342451.11.peg.1650"/>
<dbReference type="eggNOG" id="COG1193">
    <property type="taxonomic scope" value="Bacteria"/>
</dbReference>
<dbReference type="HOGENOM" id="CLU_011252_2_1_9"/>
<dbReference type="OrthoDB" id="9808166at2"/>
<dbReference type="Proteomes" id="UP000006371">
    <property type="component" value="Chromosome"/>
</dbReference>
<dbReference type="GO" id="GO:0005524">
    <property type="term" value="F:ATP binding"/>
    <property type="evidence" value="ECO:0007669"/>
    <property type="project" value="UniProtKB-UniRule"/>
</dbReference>
<dbReference type="GO" id="GO:0016887">
    <property type="term" value="F:ATP hydrolysis activity"/>
    <property type="evidence" value="ECO:0007669"/>
    <property type="project" value="InterPro"/>
</dbReference>
<dbReference type="GO" id="GO:0140664">
    <property type="term" value="F:ATP-dependent DNA damage sensor activity"/>
    <property type="evidence" value="ECO:0007669"/>
    <property type="project" value="InterPro"/>
</dbReference>
<dbReference type="GO" id="GO:0004519">
    <property type="term" value="F:endonuclease activity"/>
    <property type="evidence" value="ECO:0007669"/>
    <property type="project" value="UniProtKB-UniRule"/>
</dbReference>
<dbReference type="GO" id="GO:0030983">
    <property type="term" value="F:mismatched DNA binding"/>
    <property type="evidence" value="ECO:0007669"/>
    <property type="project" value="InterPro"/>
</dbReference>
<dbReference type="GO" id="GO:0043023">
    <property type="term" value="F:ribosomal large subunit binding"/>
    <property type="evidence" value="ECO:0007669"/>
    <property type="project" value="UniProtKB-UniRule"/>
</dbReference>
<dbReference type="GO" id="GO:0019843">
    <property type="term" value="F:rRNA binding"/>
    <property type="evidence" value="ECO:0007669"/>
    <property type="project" value="UniProtKB-UniRule"/>
</dbReference>
<dbReference type="GO" id="GO:0006298">
    <property type="term" value="P:mismatch repair"/>
    <property type="evidence" value="ECO:0007669"/>
    <property type="project" value="InterPro"/>
</dbReference>
<dbReference type="GO" id="GO:0045910">
    <property type="term" value="P:negative regulation of DNA recombination"/>
    <property type="evidence" value="ECO:0007669"/>
    <property type="project" value="InterPro"/>
</dbReference>
<dbReference type="GO" id="GO:0072344">
    <property type="term" value="P:rescue of stalled ribosome"/>
    <property type="evidence" value="ECO:0007669"/>
    <property type="project" value="UniProtKB-UniRule"/>
</dbReference>
<dbReference type="CDD" id="cd03280">
    <property type="entry name" value="ABC_MutS2"/>
    <property type="match status" value="1"/>
</dbReference>
<dbReference type="FunFam" id="3.40.50.300:FF:000830">
    <property type="entry name" value="Endonuclease MutS2"/>
    <property type="match status" value="1"/>
</dbReference>
<dbReference type="Gene3D" id="3.30.1370.110">
    <property type="match status" value="1"/>
</dbReference>
<dbReference type="Gene3D" id="3.40.50.300">
    <property type="entry name" value="P-loop containing nucleotide triphosphate hydrolases"/>
    <property type="match status" value="1"/>
</dbReference>
<dbReference type="HAMAP" id="MF_00092">
    <property type="entry name" value="MutS2"/>
    <property type="match status" value="1"/>
</dbReference>
<dbReference type="InterPro" id="IPR000432">
    <property type="entry name" value="DNA_mismatch_repair_MutS_C"/>
</dbReference>
<dbReference type="InterPro" id="IPR007696">
    <property type="entry name" value="DNA_mismatch_repair_MutS_core"/>
</dbReference>
<dbReference type="InterPro" id="IPR036187">
    <property type="entry name" value="DNA_mismatch_repair_MutS_sf"/>
</dbReference>
<dbReference type="InterPro" id="IPR046893">
    <property type="entry name" value="MSSS"/>
</dbReference>
<dbReference type="InterPro" id="IPR045076">
    <property type="entry name" value="MutS"/>
</dbReference>
<dbReference type="InterPro" id="IPR005747">
    <property type="entry name" value="MutS2"/>
</dbReference>
<dbReference type="InterPro" id="IPR027417">
    <property type="entry name" value="P-loop_NTPase"/>
</dbReference>
<dbReference type="InterPro" id="IPR002625">
    <property type="entry name" value="Smr_dom"/>
</dbReference>
<dbReference type="InterPro" id="IPR036063">
    <property type="entry name" value="Smr_dom_sf"/>
</dbReference>
<dbReference type="NCBIfam" id="TIGR01069">
    <property type="entry name" value="mutS2"/>
    <property type="match status" value="1"/>
</dbReference>
<dbReference type="PANTHER" id="PTHR48466:SF2">
    <property type="entry name" value="OS10G0509000 PROTEIN"/>
    <property type="match status" value="1"/>
</dbReference>
<dbReference type="PANTHER" id="PTHR48466">
    <property type="entry name" value="OS10G0509000 PROTEIN-RELATED"/>
    <property type="match status" value="1"/>
</dbReference>
<dbReference type="Pfam" id="PF20297">
    <property type="entry name" value="MSSS"/>
    <property type="match status" value="1"/>
</dbReference>
<dbReference type="Pfam" id="PF00488">
    <property type="entry name" value="MutS_V"/>
    <property type="match status" value="1"/>
</dbReference>
<dbReference type="Pfam" id="PF01713">
    <property type="entry name" value="Smr"/>
    <property type="match status" value="1"/>
</dbReference>
<dbReference type="PIRSF" id="PIRSF005814">
    <property type="entry name" value="MutS_YshD"/>
    <property type="match status" value="1"/>
</dbReference>
<dbReference type="SMART" id="SM00534">
    <property type="entry name" value="MUTSac"/>
    <property type="match status" value="1"/>
</dbReference>
<dbReference type="SMART" id="SM00533">
    <property type="entry name" value="MUTSd"/>
    <property type="match status" value="1"/>
</dbReference>
<dbReference type="SMART" id="SM00463">
    <property type="entry name" value="SMR"/>
    <property type="match status" value="1"/>
</dbReference>
<dbReference type="SUPFAM" id="SSF48334">
    <property type="entry name" value="DNA repair protein MutS, domain III"/>
    <property type="match status" value="1"/>
</dbReference>
<dbReference type="SUPFAM" id="SSF52540">
    <property type="entry name" value="P-loop containing nucleoside triphosphate hydrolases"/>
    <property type="match status" value="1"/>
</dbReference>
<dbReference type="SUPFAM" id="SSF160443">
    <property type="entry name" value="SMR domain-like"/>
    <property type="match status" value="1"/>
</dbReference>
<dbReference type="PROSITE" id="PS00486">
    <property type="entry name" value="DNA_MISMATCH_REPAIR_2"/>
    <property type="match status" value="1"/>
</dbReference>
<dbReference type="PROSITE" id="PS50828">
    <property type="entry name" value="SMR"/>
    <property type="match status" value="1"/>
</dbReference>
<feature type="chain" id="PRO_1000093385" description="Endonuclease MutS2">
    <location>
        <begin position="1"/>
        <end position="782"/>
    </location>
</feature>
<feature type="domain" description="Smr" evidence="1">
    <location>
        <begin position="707"/>
        <end position="782"/>
    </location>
</feature>
<feature type="binding site" evidence="1">
    <location>
        <begin position="336"/>
        <end position="343"/>
    </location>
    <ligand>
        <name>ATP</name>
        <dbReference type="ChEBI" id="CHEBI:30616"/>
    </ligand>
</feature>
<name>MUTS2_STAS1</name>
<gene>
    <name evidence="1" type="primary">mutS2</name>
    <name evidence="1" type="synonym">rqcU</name>
    <name type="ordered locus">SSP1651</name>
</gene>
<evidence type="ECO:0000255" key="1">
    <source>
        <dbReference type="HAMAP-Rule" id="MF_00092"/>
    </source>
</evidence>
<proteinExistence type="inferred from homology"/>
<reference key="1">
    <citation type="journal article" date="2005" name="Proc. Natl. Acad. Sci. U.S.A.">
        <title>Whole genome sequence of Staphylococcus saprophyticus reveals the pathogenesis of uncomplicated urinary tract infection.</title>
        <authorList>
            <person name="Kuroda M."/>
            <person name="Yamashita A."/>
            <person name="Hirakawa H."/>
            <person name="Kumano M."/>
            <person name="Morikawa K."/>
            <person name="Higashide M."/>
            <person name="Maruyama A."/>
            <person name="Inose Y."/>
            <person name="Matoba K."/>
            <person name="Toh H."/>
            <person name="Kuhara S."/>
            <person name="Hattori M."/>
            <person name="Ohta T."/>
        </authorList>
    </citation>
    <scope>NUCLEOTIDE SEQUENCE [LARGE SCALE GENOMIC DNA]</scope>
    <source>
        <strain>ATCC 15305 / DSM 20229 / NCIMB 8711 / NCTC 7292 / S-41</strain>
    </source>
</reference>
<accession>Q49WR1</accession>
<sequence length="782" mass="88386">MRQKSLNVLEFDKIKALIENETISDLGKEKVVDMAPATDFNTVEFQMNETDEISQIYNKHRMPSLSGLAKISTYIHRAKIGGVLSVSELNVIKRLIQIQNQYKTFYNNLLNEEETINYPILNDRMEQLPVLSDLYQSIHQKCDTYDLYDNASYELQGIRSKISSTNQRIKQNLDKIVKSQANQKKLSDAIVTVRNERNVIPVKAEYRQDFNGIVHDQSASGQTLYIEPSSIVEMSNQISRLKNDEAIERERILSALTVEVAEEADACLISESIMGQIDFLTAKARYASSIKGTKPQFTKDRTVYLPKAFHPLLDKQTVVANTIEFAQDIETVIITGPNTGGKTVTLKTLGLIIVMAQSGILIPTLDGSQLSIFENVYCDIGDEQSIEQSLSTFSSHMKNIVEILQDTTKNSLILFDELGAGTDPSEGAALAMSILDHVHEIGSLVMATTHYPELKAYSYNREGVMNASVEFDVNTLSPTYKLLMGVPGRSNAFDISKKLGLNMKVIQKAKSMIGQDEQEINEMIASLESNSKRVDEQRIELDYLLREAQDTHDALAKQYEQYQNHEKQLMNEAKEKANQRVKSATKEADDILKELRELRDQKGADVKEHELIDKKKQLDDQYEAKSLKQNVQKKKWDEINAGDEVKVLTYGQKGEVLELIDNNEAVVQMGIIKMKLPLEDLEKTKKTKSEPTKMIKRENRQSIKMELDLRGYRYDEAMVAVDQYLDQAVLSNYEQVYIIHGKGTGALQKGVQNHLKRHKSVASYRNGMPSEGGFGVTVVEIK</sequence>
<organism>
    <name type="scientific">Staphylococcus saprophyticus subsp. saprophyticus (strain ATCC 15305 / DSM 20229 / NCIMB 8711 / NCTC 7292 / S-41)</name>
    <dbReference type="NCBI Taxonomy" id="342451"/>
    <lineage>
        <taxon>Bacteria</taxon>
        <taxon>Bacillati</taxon>
        <taxon>Bacillota</taxon>
        <taxon>Bacilli</taxon>
        <taxon>Bacillales</taxon>
        <taxon>Staphylococcaceae</taxon>
        <taxon>Staphylococcus</taxon>
    </lineage>
</organism>
<comment type="function">
    <text evidence="1">Endonuclease that is involved in the suppression of homologous recombination and thus may have a key role in the control of bacterial genetic diversity.</text>
</comment>
<comment type="function">
    <text evidence="1">Acts as a ribosome collision sensor, splitting the ribosome into its 2 subunits. Detects stalled/collided 70S ribosomes which it binds and splits by an ATP-hydrolysis driven conformational change. Acts upstream of the ribosome quality control system (RQC), a ribosome-associated complex that mediates the extraction of incompletely synthesized nascent chains from stalled ribosomes and their subsequent degradation. Probably generates substrates for RQC.</text>
</comment>
<comment type="subunit">
    <text evidence="1">Homodimer. Binds to stalled ribosomes, contacting rRNA.</text>
</comment>
<comment type="similarity">
    <text evidence="1">Belongs to the DNA mismatch repair MutS family. MutS2 subfamily.</text>
</comment>
<protein>
    <recommendedName>
        <fullName evidence="1">Endonuclease MutS2</fullName>
        <ecNumber evidence="1">3.1.-.-</ecNumber>
    </recommendedName>
    <alternativeName>
        <fullName evidence="1">Ribosome-associated protein quality control-upstream factor</fullName>
        <shortName evidence="1">RQC-upstream factor</shortName>
        <shortName evidence="1">RqcU</shortName>
        <ecNumber evidence="1">3.6.4.-</ecNumber>
    </alternativeName>
</protein>